<sequence>MARKYFGTDGVRGRVGELPITPEFVMRLGYAAGVTLVAREHLPAGERPAILIGKDTRVSGYMLEAALQAGFAAAGVDVLLAGPIPTPAVAYLTRALRLQAGVVISASHNPFYDNGIKFFSAGGAKLPDAVEAEIEERIGQPMGCAESARLGRARRIGDAAGRYIEFCKSSFPNELDLRGLRIALDCAHGAAYHIAPNVFHELGAEVISVGVDPNGLNINDGVGATRPENLRQAVLSHGADLGIALDGDGDRLIMVDRQGEIYDGDKLLYVIASARAAEGRLDGVVGTLMSNLGFEHALERRGVAFARAKVGDRYVLEMLHERGWKIGGENSGHIICLDCHTTGDGIISALQVLAALKHREMSLSEACKDLVFYPQRLINVRLPAGFDWKADARIAQTAADAERTLGDTGRVLLRPSGTEPLLRVMVEGRDEQLVESLARGIAGAVELAVAG</sequence>
<proteinExistence type="inferred from homology"/>
<name>GLMM_AZOSB</name>
<keyword id="KW-0413">Isomerase</keyword>
<keyword id="KW-0460">Magnesium</keyword>
<keyword id="KW-0479">Metal-binding</keyword>
<keyword id="KW-0597">Phosphoprotein</keyword>
<keyword id="KW-1185">Reference proteome</keyword>
<comment type="function">
    <text evidence="1">Catalyzes the conversion of glucosamine-6-phosphate to glucosamine-1-phosphate.</text>
</comment>
<comment type="catalytic activity">
    <reaction evidence="1">
        <text>alpha-D-glucosamine 1-phosphate = D-glucosamine 6-phosphate</text>
        <dbReference type="Rhea" id="RHEA:23424"/>
        <dbReference type="ChEBI" id="CHEBI:58516"/>
        <dbReference type="ChEBI" id="CHEBI:58725"/>
        <dbReference type="EC" id="5.4.2.10"/>
    </reaction>
</comment>
<comment type="cofactor">
    <cofactor evidence="1">
        <name>Mg(2+)</name>
        <dbReference type="ChEBI" id="CHEBI:18420"/>
    </cofactor>
    <text evidence="1">Binds 1 Mg(2+) ion per subunit.</text>
</comment>
<comment type="PTM">
    <text evidence="1">Activated by phosphorylation.</text>
</comment>
<comment type="similarity">
    <text evidence="1">Belongs to the phosphohexose mutase family.</text>
</comment>
<evidence type="ECO:0000255" key="1">
    <source>
        <dbReference type="HAMAP-Rule" id="MF_01554"/>
    </source>
</evidence>
<protein>
    <recommendedName>
        <fullName evidence="1">Phosphoglucosamine mutase</fullName>
        <ecNumber evidence="1">5.4.2.10</ecNumber>
    </recommendedName>
</protein>
<reference key="1">
    <citation type="journal article" date="2006" name="Nat. Biotechnol.">
        <title>Complete genome of the mutualistic, N2-fixing grass endophyte Azoarcus sp. strain BH72.</title>
        <authorList>
            <person name="Krause A."/>
            <person name="Ramakumar A."/>
            <person name="Bartels D."/>
            <person name="Battistoni F."/>
            <person name="Bekel T."/>
            <person name="Boch J."/>
            <person name="Boehm M."/>
            <person name="Friedrich F."/>
            <person name="Hurek T."/>
            <person name="Krause L."/>
            <person name="Linke B."/>
            <person name="McHardy A.C."/>
            <person name="Sarkar A."/>
            <person name="Schneiker S."/>
            <person name="Syed A.A."/>
            <person name="Thauer R."/>
            <person name="Vorhoelter F.-J."/>
            <person name="Weidner S."/>
            <person name="Puehler A."/>
            <person name="Reinhold-Hurek B."/>
            <person name="Kaiser O."/>
            <person name="Goesmann A."/>
        </authorList>
    </citation>
    <scope>NUCLEOTIDE SEQUENCE [LARGE SCALE GENOMIC DNA]</scope>
    <source>
        <strain>BH72</strain>
    </source>
</reference>
<accession>A1K5A1</accession>
<dbReference type="EC" id="5.4.2.10" evidence="1"/>
<dbReference type="EMBL" id="AM406670">
    <property type="protein sequence ID" value="CAL94006.1"/>
    <property type="molecule type" value="Genomic_DNA"/>
</dbReference>
<dbReference type="RefSeq" id="WP_011765122.1">
    <property type="nucleotide sequence ID" value="NC_008702.1"/>
</dbReference>
<dbReference type="SMR" id="A1K5A1"/>
<dbReference type="STRING" id="62928.azo1389"/>
<dbReference type="KEGG" id="azo:azo1389"/>
<dbReference type="eggNOG" id="COG1109">
    <property type="taxonomic scope" value="Bacteria"/>
</dbReference>
<dbReference type="HOGENOM" id="CLU_016950_7_0_4"/>
<dbReference type="Proteomes" id="UP000002588">
    <property type="component" value="Chromosome"/>
</dbReference>
<dbReference type="GO" id="GO:0005829">
    <property type="term" value="C:cytosol"/>
    <property type="evidence" value="ECO:0007669"/>
    <property type="project" value="TreeGrafter"/>
</dbReference>
<dbReference type="GO" id="GO:0000287">
    <property type="term" value="F:magnesium ion binding"/>
    <property type="evidence" value="ECO:0007669"/>
    <property type="project" value="UniProtKB-UniRule"/>
</dbReference>
<dbReference type="GO" id="GO:0008966">
    <property type="term" value="F:phosphoglucosamine mutase activity"/>
    <property type="evidence" value="ECO:0007669"/>
    <property type="project" value="UniProtKB-UniRule"/>
</dbReference>
<dbReference type="GO" id="GO:0004615">
    <property type="term" value="F:phosphomannomutase activity"/>
    <property type="evidence" value="ECO:0007669"/>
    <property type="project" value="TreeGrafter"/>
</dbReference>
<dbReference type="GO" id="GO:0005975">
    <property type="term" value="P:carbohydrate metabolic process"/>
    <property type="evidence" value="ECO:0007669"/>
    <property type="project" value="InterPro"/>
</dbReference>
<dbReference type="GO" id="GO:0009252">
    <property type="term" value="P:peptidoglycan biosynthetic process"/>
    <property type="evidence" value="ECO:0007669"/>
    <property type="project" value="TreeGrafter"/>
</dbReference>
<dbReference type="GO" id="GO:0006048">
    <property type="term" value="P:UDP-N-acetylglucosamine biosynthetic process"/>
    <property type="evidence" value="ECO:0007669"/>
    <property type="project" value="TreeGrafter"/>
</dbReference>
<dbReference type="CDD" id="cd05802">
    <property type="entry name" value="GlmM"/>
    <property type="match status" value="1"/>
</dbReference>
<dbReference type="FunFam" id="3.30.310.50:FF:000001">
    <property type="entry name" value="Phosphoglucosamine mutase"/>
    <property type="match status" value="1"/>
</dbReference>
<dbReference type="FunFam" id="3.40.120.10:FF:000001">
    <property type="entry name" value="Phosphoglucosamine mutase"/>
    <property type="match status" value="1"/>
</dbReference>
<dbReference type="FunFam" id="3.40.120.10:FF:000003">
    <property type="entry name" value="Phosphoglucosamine mutase"/>
    <property type="match status" value="1"/>
</dbReference>
<dbReference type="Gene3D" id="3.40.120.10">
    <property type="entry name" value="Alpha-D-Glucose-1,6-Bisphosphate, subunit A, domain 3"/>
    <property type="match status" value="3"/>
</dbReference>
<dbReference type="Gene3D" id="3.30.310.50">
    <property type="entry name" value="Alpha-D-phosphohexomutase, C-terminal domain"/>
    <property type="match status" value="1"/>
</dbReference>
<dbReference type="HAMAP" id="MF_01554_B">
    <property type="entry name" value="GlmM_B"/>
    <property type="match status" value="1"/>
</dbReference>
<dbReference type="InterPro" id="IPR005844">
    <property type="entry name" value="A-D-PHexomutase_a/b/a-I"/>
</dbReference>
<dbReference type="InterPro" id="IPR016055">
    <property type="entry name" value="A-D-PHexomutase_a/b/a-I/II/III"/>
</dbReference>
<dbReference type="InterPro" id="IPR005845">
    <property type="entry name" value="A-D-PHexomutase_a/b/a-II"/>
</dbReference>
<dbReference type="InterPro" id="IPR005846">
    <property type="entry name" value="A-D-PHexomutase_a/b/a-III"/>
</dbReference>
<dbReference type="InterPro" id="IPR005843">
    <property type="entry name" value="A-D-PHexomutase_C"/>
</dbReference>
<dbReference type="InterPro" id="IPR036900">
    <property type="entry name" value="A-D-PHexomutase_C_sf"/>
</dbReference>
<dbReference type="InterPro" id="IPR016066">
    <property type="entry name" value="A-D-PHexomutase_CS"/>
</dbReference>
<dbReference type="InterPro" id="IPR005841">
    <property type="entry name" value="Alpha-D-phosphohexomutase_SF"/>
</dbReference>
<dbReference type="InterPro" id="IPR006352">
    <property type="entry name" value="GlmM_bact"/>
</dbReference>
<dbReference type="InterPro" id="IPR050060">
    <property type="entry name" value="Phosphoglucosamine_mutase"/>
</dbReference>
<dbReference type="NCBIfam" id="TIGR01455">
    <property type="entry name" value="glmM"/>
    <property type="match status" value="1"/>
</dbReference>
<dbReference type="NCBIfam" id="NF008139">
    <property type="entry name" value="PRK10887.1"/>
    <property type="match status" value="1"/>
</dbReference>
<dbReference type="PANTHER" id="PTHR42946:SF1">
    <property type="entry name" value="PHOSPHOGLUCOMUTASE (ALPHA-D-GLUCOSE-1,6-BISPHOSPHATE-DEPENDENT)"/>
    <property type="match status" value="1"/>
</dbReference>
<dbReference type="PANTHER" id="PTHR42946">
    <property type="entry name" value="PHOSPHOHEXOSE MUTASE"/>
    <property type="match status" value="1"/>
</dbReference>
<dbReference type="Pfam" id="PF02878">
    <property type="entry name" value="PGM_PMM_I"/>
    <property type="match status" value="1"/>
</dbReference>
<dbReference type="Pfam" id="PF02879">
    <property type="entry name" value="PGM_PMM_II"/>
    <property type="match status" value="1"/>
</dbReference>
<dbReference type="Pfam" id="PF02880">
    <property type="entry name" value="PGM_PMM_III"/>
    <property type="match status" value="1"/>
</dbReference>
<dbReference type="Pfam" id="PF00408">
    <property type="entry name" value="PGM_PMM_IV"/>
    <property type="match status" value="1"/>
</dbReference>
<dbReference type="PRINTS" id="PR00509">
    <property type="entry name" value="PGMPMM"/>
</dbReference>
<dbReference type="SUPFAM" id="SSF55957">
    <property type="entry name" value="Phosphoglucomutase, C-terminal domain"/>
    <property type="match status" value="1"/>
</dbReference>
<dbReference type="SUPFAM" id="SSF53738">
    <property type="entry name" value="Phosphoglucomutase, first 3 domains"/>
    <property type="match status" value="3"/>
</dbReference>
<dbReference type="PROSITE" id="PS00710">
    <property type="entry name" value="PGM_PMM"/>
    <property type="match status" value="1"/>
</dbReference>
<organism>
    <name type="scientific">Azoarcus sp. (strain BH72)</name>
    <dbReference type="NCBI Taxonomy" id="418699"/>
    <lineage>
        <taxon>Bacteria</taxon>
        <taxon>Pseudomonadati</taxon>
        <taxon>Pseudomonadota</taxon>
        <taxon>Betaproteobacteria</taxon>
        <taxon>Rhodocyclales</taxon>
        <taxon>Zoogloeaceae</taxon>
        <taxon>Azoarcus</taxon>
    </lineage>
</organism>
<gene>
    <name evidence="1" type="primary">glmM</name>
    <name type="ordered locus">azo1389</name>
</gene>
<feature type="chain" id="PRO_0000301278" description="Phosphoglucosamine mutase">
    <location>
        <begin position="1"/>
        <end position="451"/>
    </location>
</feature>
<feature type="active site" description="Phosphoserine intermediate" evidence="1">
    <location>
        <position position="107"/>
    </location>
</feature>
<feature type="binding site" description="via phosphate group" evidence="1">
    <location>
        <position position="107"/>
    </location>
    <ligand>
        <name>Mg(2+)</name>
        <dbReference type="ChEBI" id="CHEBI:18420"/>
    </ligand>
</feature>
<feature type="binding site" evidence="1">
    <location>
        <position position="246"/>
    </location>
    <ligand>
        <name>Mg(2+)</name>
        <dbReference type="ChEBI" id="CHEBI:18420"/>
    </ligand>
</feature>
<feature type="binding site" evidence="1">
    <location>
        <position position="248"/>
    </location>
    <ligand>
        <name>Mg(2+)</name>
        <dbReference type="ChEBI" id="CHEBI:18420"/>
    </ligand>
</feature>
<feature type="binding site" evidence="1">
    <location>
        <position position="250"/>
    </location>
    <ligand>
        <name>Mg(2+)</name>
        <dbReference type="ChEBI" id="CHEBI:18420"/>
    </ligand>
</feature>
<feature type="modified residue" description="Phosphoserine" evidence="1">
    <location>
        <position position="107"/>
    </location>
</feature>